<accession>F4JZG9</accession>
<accession>Q8LCU5</accession>
<accession>Q8VY96</accession>
<accession>Q9FMP9</accession>
<gene>
    <name evidence="5" type="primary">TERC</name>
    <name evidence="9" type="synonym">PDE149</name>
    <name evidence="8" type="ordered locus">At5g12130</name>
    <name evidence="10" type="ORF">MXC9.9</name>
</gene>
<dbReference type="EMBL" id="AB007727">
    <property type="protein sequence ID" value="BAB10031.1"/>
    <property type="status" value="ALT_SEQ"/>
    <property type="molecule type" value="Genomic_DNA"/>
</dbReference>
<dbReference type="EMBL" id="CP002688">
    <property type="protein sequence ID" value="AED91766.1"/>
    <property type="molecule type" value="Genomic_DNA"/>
</dbReference>
<dbReference type="EMBL" id="AY086401">
    <property type="protein sequence ID" value="AAM64468.1"/>
    <property type="molecule type" value="mRNA"/>
</dbReference>
<dbReference type="EMBL" id="AY072336">
    <property type="protein sequence ID" value="AAL61943.1"/>
    <property type="molecule type" value="mRNA"/>
</dbReference>
<dbReference type="EMBL" id="AY114608">
    <property type="protein sequence ID" value="AAM47927.1"/>
    <property type="molecule type" value="mRNA"/>
</dbReference>
<dbReference type="RefSeq" id="NP_001331346.1">
    <property type="nucleotide sequence ID" value="NM_001343228.1"/>
</dbReference>
<dbReference type="RefSeq" id="NP_568257.1">
    <property type="nucleotide sequence ID" value="NM_121251.4"/>
</dbReference>
<dbReference type="FunCoup" id="F4JZG9">
    <property type="interactions" value="663"/>
</dbReference>
<dbReference type="STRING" id="3702.F4JZG9"/>
<dbReference type="iPTMnet" id="F4JZG9"/>
<dbReference type="PaxDb" id="3702-AT5G12130.1"/>
<dbReference type="ProteomicsDB" id="234169"/>
<dbReference type="EnsemblPlants" id="AT5G12130.1">
    <property type="protein sequence ID" value="AT5G12130.1"/>
    <property type="gene ID" value="AT5G12130"/>
</dbReference>
<dbReference type="GeneID" id="831086"/>
<dbReference type="Gramene" id="AT5G12130.1">
    <property type="protein sequence ID" value="AT5G12130.1"/>
    <property type="gene ID" value="AT5G12130"/>
</dbReference>
<dbReference type="KEGG" id="ath:AT5G12130"/>
<dbReference type="Araport" id="AT5G12130"/>
<dbReference type="TAIR" id="AT5G12130">
    <property type="gene designation" value="PDE149"/>
</dbReference>
<dbReference type="eggNOG" id="ENOG502QQNF">
    <property type="taxonomic scope" value="Eukaryota"/>
</dbReference>
<dbReference type="HOGENOM" id="CLU_045644_1_0_1"/>
<dbReference type="InParanoid" id="F4JZG9"/>
<dbReference type="PRO" id="PR:F4JZG9"/>
<dbReference type="Proteomes" id="UP000006548">
    <property type="component" value="Chromosome 5"/>
</dbReference>
<dbReference type="ExpressionAtlas" id="F4JZG9">
    <property type="expression patterns" value="baseline and differential"/>
</dbReference>
<dbReference type="GO" id="GO:0009534">
    <property type="term" value="C:chloroplast thylakoid"/>
    <property type="evidence" value="ECO:0000314"/>
    <property type="project" value="TAIR"/>
</dbReference>
<dbReference type="GO" id="GO:0009535">
    <property type="term" value="C:chloroplast thylakoid membrane"/>
    <property type="evidence" value="ECO:0000314"/>
    <property type="project" value="TAIR"/>
</dbReference>
<dbReference type="GO" id="GO:0090351">
    <property type="term" value="P:seedling development"/>
    <property type="evidence" value="ECO:0000315"/>
    <property type="project" value="TAIR"/>
</dbReference>
<dbReference type="GO" id="GO:0010027">
    <property type="term" value="P:thylakoid membrane organization"/>
    <property type="evidence" value="ECO:0000315"/>
    <property type="project" value="TAIR"/>
</dbReference>
<dbReference type="InterPro" id="IPR005496">
    <property type="entry name" value="Integral_membrane_TerC"/>
</dbReference>
<dbReference type="InterPro" id="IPR022369">
    <property type="entry name" value="Integral_membrane_TerC_rswitch"/>
</dbReference>
<dbReference type="NCBIfam" id="TIGR03718">
    <property type="entry name" value="R_switched_Alx"/>
    <property type="match status" value="1"/>
</dbReference>
<dbReference type="PANTHER" id="PTHR30238">
    <property type="entry name" value="MEMBRANE BOUND PREDICTED REDOX MODULATOR"/>
    <property type="match status" value="1"/>
</dbReference>
<dbReference type="PANTHER" id="PTHR30238:SF0">
    <property type="entry name" value="THYLAKOID MEMBRANE PROTEIN TERC, CHLOROPLASTIC"/>
    <property type="match status" value="1"/>
</dbReference>
<dbReference type="Pfam" id="PF03741">
    <property type="entry name" value="TerC"/>
    <property type="match status" value="1"/>
</dbReference>
<feature type="transit peptide" description="Chloroplast" evidence="1">
    <location>
        <begin position="1"/>
        <end position="48"/>
    </location>
</feature>
<feature type="chain" id="PRO_0000434012" description="Thylakoid membrane protein TERC, chloroplastic" evidence="1">
    <location>
        <begin position="49"/>
        <end position="384"/>
    </location>
</feature>
<feature type="topological domain" description="Stromal" evidence="7">
    <location>
        <begin position="49"/>
        <end position="115"/>
    </location>
</feature>
<feature type="transmembrane region" description="Helical" evidence="1">
    <location>
        <begin position="116"/>
        <end position="136"/>
    </location>
</feature>
<feature type="topological domain" description="Lumenal, thylakoid" evidence="7">
    <location>
        <begin position="137"/>
        <end position="145"/>
    </location>
</feature>
<feature type="transmembrane region" description="Helical" evidence="1">
    <location>
        <begin position="146"/>
        <end position="166"/>
    </location>
</feature>
<feature type="topological domain" description="Stromal" evidence="7">
    <location>
        <begin position="167"/>
        <end position="180"/>
    </location>
</feature>
<feature type="transmembrane region" description="Helical" evidence="1">
    <location>
        <begin position="181"/>
        <end position="201"/>
    </location>
</feature>
<feature type="topological domain" description="Lumenal, thylakoid" evidence="7">
    <location>
        <begin position="202"/>
        <end position="206"/>
    </location>
</feature>
<feature type="transmembrane region" description="Helical" evidence="1">
    <location>
        <begin position="207"/>
        <end position="227"/>
    </location>
</feature>
<feature type="topological domain" description="Stromal" evidence="7">
    <location>
        <begin position="228"/>
        <end position="275"/>
    </location>
</feature>
<feature type="transmembrane region" description="Helical" evidence="1">
    <location>
        <begin position="276"/>
        <end position="296"/>
    </location>
</feature>
<feature type="topological domain" description="Lumenal, thylakoid" evidence="7">
    <location>
        <begin position="297"/>
        <end position="301"/>
    </location>
</feature>
<feature type="transmembrane region" description="Helical" evidence="1">
    <location>
        <begin position="302"/>
        <end position="322"/>
    </location>
</feature>
<feature type="topological domain" description="Stromal" evidence="7">
    <location>
        <begin position="323"/>
        <end position="335"/>
    </location>
</feature>
<feature type="transmembrane region" description="Helical" evidence="1">
    <location>
        <begin position="336"/>
        <end position="356"/>
    </location>
</feature>
<feature type="topological domain" description="Lumenal, thylakoid" evidence="7">
    <location>
        <position position="357"/>
    </location>
</feature>
<feature type="transmembrane region" description="Helical" evidence="1">
    <location>
        <begin position="358"/>
        <end position="378"/>
    </location>
</feature>
<feature type="topological domain" description="Stromal" evidence="7">
    <location>
        <begin position="379"/>
        <end position="384"/>
    </location>
</feature>
<feature type="region of interest" description="Disordered" evidence="2">
    <location>
        <begin position="68"/>
        <end position="104"/>
    </location>
</feature>
<feature type="compositionally biased region" description="Basic and acidic residues" evidence="2">
    <location>
        <begin position="76"/>
        <end position="88"/>
    </location>
</feature>
<feature type="sequence conflict" description="In Ref. 3; AAM64468." evidence="6" ref="3">
    <original>V</original>
    <variation>G</variation>
    <location>
        <position position="304"/>
    </location>
</feature>
<comment type="function">
    <text evidence="3 4">Integral thylakoid membrane protein that plays a crucial role in thylakoid membrane biogenesis and thylakoid formation in early chloroplast development (PubMed:18429937). Is essential for de novo synthesis of photosystem II (PSII) core proteins and required for efficient insertion of thylakoid membrane proteins, presumably via interaction with ALB3. May assist synthesis of thylakoid membrane proteins at the membrane insertion step (PubMed:24612058).</text>
</comment>
<comment type="subunit">
    <text evidence="4">Interacts with ALB3.</text>
</comment>
<comment type="subcellular location">
    <subcellularLocation>
        <location evidence="3 4">Plastid</location>
        <location evidence="3 4">Chloroplast thylakoid membrane</location>
        <topology evidence="1">Multi-pass membrane protein</topology>
    </subcellularLocation>
</comment>
<comment type="tissue specificity">
    <text evidence="3">Expressed in roots, rosette and cauline leaves, stems and flowers.</text>
</comment>
<comment type="disruption phenotype">
    <text evidence="3">Pigment deficiency and seedling lethality.</text>
</comment>
<comment type="sequence caution" evidence="6">
    <conflict type="erroneous gene model prediction">
        <sequence resource="EMBL-CDS" id="BAB10031"/>
    </conflict>
</comment>
<reference key="1">
    <citation type="journal article" date="1997" name="DNA Res.">
        <title>Structural analysis of Arabidopsis thaliana chromosome 5. III. Sequence features of the regions of 1,191,918 bp covered by seventeen physically assigned P1 clones.</title>
        <authorList>
            <person name="Nakamura Y."/>
            <person name="Sato S."/>
            <person name="Kaneko T."/>
            <person name="Kotani H."/>
            <person name="Asamizu E."/>
            <person name="Miyajima N."/>
            <person name="Tabata S."/>
        </authorList>
    </citation>
    <scope>NUCLEOTIDE SEQUENCE [LARGE SCALE GENOMIC DNA]</scope>
    <source>
        <strain>cv. Columbia</strain>
    </source>
</reference>
<reference key="2">
    <citation type="journal article" date="2017" name="Plant J.">
        <title>Araport11: a complete reannotation of the Arabidopsis thaliana reference genome.</title>
        <authorList>
            <person name="Cheng C.Y."/>
            <person name="Krishnakumar V."/>
            <person name="Chan A.P."/>
            <person name="Thibaud-Nissen F."/>
            <person name="Schobel S."/>
            <person name="Town C.D."/>
        </authorList>
    </citation>
    <scope>GENOME REANNOTATION</scope>
    <source>
        <strain>cv. Columbia</strain>
    </source>
</reference>
<reference key="3">
    <citation type="submission" date="2002-03" db="EMBL/GenBank/DDBJ databases">
        <title>Full-length cDNA from Arabidopsis thaliana.</title>
        <authorList>
            <person name="Brover V.V."/>
            <person name="Troukhan M.E."/>
            <person name="Alexandrov N.A."/>
            <person name="Lu Y.-P."/>
            <person name="Flavell R.B."/>
            <person name="Feldmann K.A."/>
        </authorList>
    </citation>
    <scope>NUCLEOTIDE SEQUENCE [LARGE SCALE MRNA]</scope>
</reference>
<reference key="4">
    <citation type="journal article" date="2003" name="Science">
        <title>Empirical analysis of transcriptional activity in the Arabidopsis genome.</title>
        <authorList>
            <person name="Yamada K."/>
            <person name="Lim J."/>
            <person name="Dale J.M."/>
            <person name="Chen H."/>
            <person name="Shinn P."/>
            <person name="Palm C.J."/>
            <person name="Southwick A.M."/>
            <person name="Wu H.C."/>
            <person name="Kim C.J."/>
            <person name="Nguyen M."/>
            <person name="Pham P.K."/>
            <person name="Cheuk R.F."/>
            <person name="Karlin-Newmann G."/>
            <person name="Liu S.X."/>
            <person name="Lam B."/>
            <person name="Sakano H."/>
            <person name="Wu T."/>
            <person name="Yu G."/>
            <person name="Miranda M."/>
            <person name="Quach H.L."/>
            <person name="Tripp M."/>
            <person name="Chang C.H."/>
            <person name="Lee J.M."/>
            <person name="Toriumi M.J."/>
            <person name="Chan M.M."/>
            <person name="Tang C.C."/>
            <person name="Onodera C.S."/>
            <person name="Deng J.M."/>
            <person name="Akiyama K."/>
            <person name="Ansari Y."/>
            <person name="Arakawa T."/>
            <person name="Banh J."/>
            <person name="Banno F."/>
            <person name="Bowser L."/>
            <person name="Brooks S.Y."/>
            <person name="Carninci P."/>
            <person name="Chao Q."/>
            <person name="Choy N."/>
            <person name="Enju A."/>
            <person name="Goldsmith A.D."/>
            <person name="Gurjal M."/>
            <person name="Hansen N.F."/>
            <person name="Hayashizaki Y."/>
            <person name="Johnson-Hopson C."/>
            <person name="Hsuan V.W."/>
            <person name="Iida K."/>
            <person name="Karnes M."/>
            <person name="Khan S."/>
            <person name="Koesema E."/>
            <person name="Ishida J."/>
            <person name="Jiang P.X."/>
            <person name="Jones T."/>
            <person name="Kawai J."/>
            <person name="Kamiya A."/>
            <person name="Meyers C."/>
            <person name="Nakajima M."/>
            <person name="Narusaka M."/>
            <person name="Seki M."/>
            <person name="Sakurai T."/>
            <person name="Satou M."/>
            <person name="Tamse R."/>
            <person name="Vaysberg M."/>
            <person name="Wallender E.K."/>
            <person name="Wong C."/>
            <person name="Yamamura Y."/>
            <person name="Yuan S."/>
            <person name="Shinozaki K."/>
            <person name="Davis R.W."/>
            <person name="Theologis A."/>
            <person name="Ecker J.R."/>
        </authorList>
    </citation>
    <scope>NUCLEOTIDE SEQUENCE [LARGE SCALE MRNA] OF 176-384</scope>
    <source>
        <strain>cv. Columbia</strain>
    </source>
</reference>
<reference key="5">
    <citation type="journal article" date="2008" name="Plant J.">
        <title>Deletion of the chloroplast-localized AtTerC gene product in Arabidopsis thaliana leads to loss of the thylakoid membrane and to seedling lethality.</title>
        <authorList>
            <person name="Kwon K.C."/>
            <person name="Cho M.H."/>
        </authorList>
    </citation>
    <scope>FUNCTION</scope>
    <scope>SUBCELLULAR LOCATION</scope>
    <scope>TISSUE SPECIFICITY</scope>
    <scope>DISRUPTION PHENOTYPE</scope>
</reference>
<reference key="6">
    <citation type="journal article" date="2014" name="Plant J.">
        <title>The Arabidopsis tellurite resistance C protein together with ALB3 is involved in photosystem II protein synthesis.</title>
        <authorList>
            <person name="Schneider A."/>
            <person name="Steinberger I."/>
            <person name="Strissel H."/>
            <person name="Kunz H.H."/>
            <person name="Manavski N."/>
            <person name="Meurer J."/>
            <person name="Burkhard G."/>
            <person name="Jarzombski S."/>
            <person name="Schunemann D."/>
            <person name="Geimer S."/>
            <person name="Flugge U.I."/>
            <person name="Leister D."/>
        </authorList>
    </citation>
    <scope>FUNCTION</scope>
    <scope>INTERACTION WITH ALB3</scope>
    <scope>SUBCELLULAR LOCATION</scope>
    <scope>TOPOLOGY</scope>
</reference>
<keyword id="KW-0150">Chloroplast</keyword>
<keyword id="KW-0472">Membrane</keyword>
<keyword id="KW-0934">Plastid</keyword>
<keyword id="KW-1185">Reference proteome</keyword>
<keyword id="KW-0793">Thylakoid</keyword>
<keyword id="KW-0809">Transit peptide</keyword>
<keyword id="KW-0812">Transmembrane</keyword>
<keyword id="KW-1133">Transmembrane helix</keyword>
<evidence type="ECO:0000255" key="1"/>
<evidence type="ECO:0000256" key="2">
    <source>
        <dbReference type="SAM" id="MobiDB-lite"/>
    </source>
</evidence>
<evidence type="ECO:0000269" key="3">
    <source>
    </source>
</evidence>
<evidence type="ECO:0000269" key="4">
    <source>
    </source>
</evidence>
<evidence type="ECO:0000303" key="5">
    <source>
    </source>
</evidence>
<evidence type="ECO:0000305" key="6"/>
<evidence type="ECO:0000305" key="7">
    <source>
    </source>
</evidence>
<evidence type="ECO:0000312" key="8">
    <source>
        <dbReference type="Araport" id="AT5G12130"/>
    </source>
</evidence>
<evidence type="ECO:0000312" key="9">
    <source>
        <dbReference type="EMBL" id="AED91766.1"/>
    </source>
</evidence>
<evidence type="ECO:0000312" key="10">
    <source>
        <dbReference type="EMBL" id="BAB10031.1"/>
    </source>
</evidence>
<name>TERC_ARATH</name>
<proteinExistence type="evidence at protein level"/>
<sequence length="384" mass="41900">MSLASVIHHGILPPAKSDRIFLTIPVFPPDFRARGWTKSPFSLLINPSLASAANRRLSHLPPIACSRGIDQEDEEKESRELLPHKNDENATTSRSSSSVDSGGLKDYQQEETYKTSFKTVALCVGTAVAFGIGIGLKEGVGKASEFFAGYILEQSLSVDNLFVFVLVFKYFKVPLMYQNKVLTYGIAGAIVFRFTLILLGTATLQKFEAVNLLLAAVLLYSSFKLFASEEDDTDLSDNFIVKTCQRFIPVTSSYDGNRFFTKHDGILKATPLLLTVAVIELSDIAFAVDSIPAVFGVTRDPFIVLTSNLFAILGLRSLYTLISEGMDELEYLQPSIAVVLGFIGVKMILDFFGFHISTEASLGVVALSLSTGVLLSLTNKSSDS</sequence>
<protein>
    <recommendedName>
        <fullName evidence="6">Thylakoid membrane protein TERC, chloroplastic</fullName>
    </recommendedName>
    <alternativeName>
        <fullName evidence="9">Protein PIGMENT DEFECTIVE 149</fullName>
    </alternativeName>
    <alternativeName>
        <fullName evidence="5">Protein TELLURITE RESISTANCE C</fullName>
        <shortName evidence="5">AtTerC</shortName>
    </alternativeName>
</protein>
<organism>
    <name type="scientific">Arabidopsis thaliana</name>
    <name type="common">Mouse-ear cress</name>
    <dbReference type="NCBI Taxonomy" id="3702"/>
    <lineage>
        <taxon>Eukaryota</taxon>
        <taxon>Viridiplantae</taxon>
        <taxon>Streptophyta</taxon>
        <taxon>Embryophyta</taxon>
        <taxon>Tracheophyta</taxon>
        <taxon>Spermatophyta</taxon>
        <taxon>Magnoliopsida</taxon>
        <taxon>eudicotyledons</taxon>
        <taxon>Gunneridae</taxon>
        <taxon>Pentapetalae</taxon>
        <taxon>rosids</taxon>
        <taxon>malvids</taxon>
        <taxon>Brassicales</taxon>
        <taxon>Brassicaceae</taxon>
        <taxon>Camelineae</taxon>
        <taxon>Arabidopsis</taxon>
    </lineage>
</organism>